<reference key="1">
    <citation type="journal article" date="1987" name="Biol. Chem. Hoppe-Seyler">
        <title>The primary structure of the hemoglobins of the adult jaguar (Panthera onco, Carnivora).</title>
        <authorList>
            <person name="Ahmed A."/>
            <person name="Jahan M."/>
            <person name="Zaidi Z.H."/>
            <person name="Braunitzer G."/>
            <person name="Goeltenboth R."/>
        </authorList>
    </citation>
    <scope>PROTEIN SEQUENCE OF 2-147</scope>
    <scope>ACETYLATION AT SER-2</scope>
</reference>
<organism>
    <name type="scientific">Panthera onca</name>
    <name type="common">Jaguar</name>
    <name type="synonym">Felis onca</name>
    <dbReference type="NCBI Taxonomy" id="9690"/>
    <lineage>
        <taxon>Eukaryota</taxon>
        <taxon>Metazoa</taxon>
        <taxon>Chordata</taxon>
        <taxon>Craniata</taxon>
        <taxon>Vertebrata</taxon>
        <taxon>Euteleostomi</taxon>
        <taxon>Mammalia</taxon>
        <taxon>Eutheria</taxon>
        <taxon>Laurasiatheria</taxon>
        <taxon>Carnivora</taxon>
        <taxon>Feliformia</taxon>
        <taxon>Felidae</taxon>
        <taxon>Pantherinae</taxon>
        <taxon>Panthera</taxon>
    </lineage>
</organism>
<accession>P68049</accession>
<accession>P10884</accession>
<feature type="initiator methionine" description="Removed" evidence="5">
    <location>
        <position position="1"/>
    </location>
</feature>
<feature type="chain" id="PRO_0000053054" description="Hemoglobin subunit beta-1">
    <location>
        <begin position="2"/>
        <end position="147"/>
    </location>
</feature>
<feature type="domain" description="Globin" evidence="4">
    <location>
        <begin position="3"/>
        <end position="147"/>
    </location>
</feature>
<feature type="binding site" description="distal binding residue">
    <location>
        <position position="64"/>
    </location>
    <ligand>
        <name>heme b</name>
        <dbReference type="ChEBI" id="CHEBI:60344"/>
    </ligand>
    <ligandPart>
        <name>Fe</name>
        <dbReference type="ChEBI" id="CHEBI:18248"/>
    </ligandPart>
</feature>
<feature type="binding site" description="proximal binding residue">
    <location>
        <position position="93"/>
    </location>
    <ligand>
        <name>heme b</name>
        <dbReference type="ChEBI" id="CHEBI:60344"/>
    </ligand>
    <ligandPart>
        <name>Fe</name>
        <dbReference type="ChEBI" id="CHEBI:18248"/>
    </ligandPart>
</feature>
<feature type="modified residue" description="N-acetylserine" evidence="5">
    <location>
        <position position="2"/>
    </location>
</feature>
<feature type="modified residue" description="N6-succinyllysine" evidence="1">
    <location>
        <position position="18"/>
    </location>
</feature>
<feature type="modified residue" description="Phosphoserine" evidence="3">
    <location>
        <position position="45"/>
    </location>
</feature>
<feature type="modified residue" description="Phosphoserine" evidence="3">
    <location>
        <position position="51"/>
    </location>
</feature>
<feature type="modified residue" description="N6-succinyllysine" evidence="2">
    <location>
        <position position="60"/>
    </location>
</feature>
<feature type="modified residue" description="Asymmetric dimethylarginine" evidence="2">
    <location>
        <position position="105"/>
    </location>
</feature>
<comment type="function">
    <text>Involved in oxygen transport from the lung to the various peripheral tissues.</text>
</comment>
<comment type="subunit">
    <text>Heterotetramer of two alpha chains and two beta chains.</text>
</comment>
<comment type="tissue specificity">
    <text>Red blood cells.</text>
</comment>
<comment type="miscellaneous">
    <text>In the cat family (felidae), the oxygen affinity of hemoglobin depends little or not at all on the association with diphosphoglycerate (DPG).</text>
</comment>
<comment type="similarity">
    <text evidence="4">Belongs to the globin family.</text>
</comment>
<dbReference type="PIR" id="S00522">
    <property type="entry name" value="HBJU"/>
</dbReference>
<dbReference type="SMR" id="P68049"/>
<dbReference type="iPTMnet" id="P68049"/>
<dbReference type="GO" id="GO:0072562">
    <property type="term" value="C:blood microparticle"/>
    <property type="evidence" value="ECO:0007669"/>
    <property type="project" value="TreeGrafter"/>
</dbReference>
<dbReference type="GO" id="GO:0031838">
    <property type="term" value="C:haptoglobin-hemoglobin complex"/>
    <property type="evidence" value="ECO:0007669"/>
    <property type="project" value="TreeGrafter"/>
</dbReference>
<dbReference type="GO" id="GO:0005833">
    <property type="term" value="C:hemoglobin complex"/>
    <property type="evidence" value="ECO:0007669"/>
    <property type="project" value="InterPro"/>
</dbReference>
<dbReference type="GO" id="GO:0031720">
    <property type="term" value="F:haptoglobin binding"/>
    <property type="evidence" value="ECO:0007669"/>
    <property type="project" value="TreeGrafter"/>
</dbReference>
<dbReference type="GO" id="GO:0020037">
    <property type="term" value="F:heme binding"/>
    <property type="evidence" value="ECO:0007669"/>
    <property type="project" value="InterPro"/>
</dbReference>
<dbReference type="GO" id="GO:0031721">
    <property type="term" value="F:hemoglobin alpha binding"/>
    <property type="evidence" value="ECO:0007669"/>
    <property type="project" value="TreeGrafter"/>
</dbReference>
<dbReference type="GO" id="GO:0046872">
    <property type="term" value="F:metal ion binding"/>
    <property type="evidence" value="ECO:0007669"/>
    <property type="project" value="UniProtKB-KW"/>
</dbReference>
<dbReference type="GO" id="GO:0043177">
    <property type="term" value="F:organic acid binding"/>
    <property type="evidence" value="ECO:0007669"/>
    <property type="project" value="TreeGrafter"/>
</dbReference>
<dbReference type="GO" id="GO:0019825">
    <property type="term" value="F:oxygen binding"/>
    <property type="evidence" value="ECO:0007669"/>
    <property type="project" value="InterPro"/>
</dbReference>
<dbReference type="GO" id="GO:0005344">
    <property type="term" value="F:oxygen carrier activity"/>
    <property type="evidence" value="ECO:0007669"/>
    <property type="project" value="UniProtKB-KW"/>
</dbReference>
<dbReference type="GO" id="GO:0004601">
    <property type="term" value="F:peroxidase activity"/>
    <property type="evidence" value="ECO:0007669"/>
    <property type="project" value="TreeGrafter"/>
</dbReference>
<dbReference type="GO" id="GO:0042744">
    <property type="term" value="P:hydrogen peroxide catabolic process"/>
    <property type="evidence" value="ECO:0007669"/>
    <property type="project" value="TreeGrafter"/>
</dbReference>
<dbReference type="CDD" id="cd08925">
    <property type="entry name" value="Hb-beta-like"/>
    <property type="match status" value="1"/>
</dbReference>
<dbReference type="FunFam" id="1.10.490.10:FF:000001">
    <property type="entry name" value="Hemoglobin subunit beta"/>
    <property type="match status" value="1"/>
</dbReference>
<dbReference type="Gene3D" id="1.10.490.10">
    <property type="entry name" value="Globins"/>
    <property type="match status" value="1"/>
</dbReference>
<dbReference type="InterPro" id="IPR000971">
    <property type="entry name" value="Globin"/>
</dbReference>
<dbReference type="InterPro" id="IPR009050">
    <property type="entry name" value="Globin-like_sf"/>
</dbReference>
<dbReference type="InterPro" id="IPR012292">
    <property type="entry name" value="Globin/Proto"/>
</dbReference>
<dbReference type="InterPro" id="IPR002337">
    <property type="entry name" value="Hemoglobin_b"/>
</dbReference>
<dbReference type="InterPro" id="IPR050056">
    <property type="entry name" value="Hemoglobin_oxygen_transport"/>
</dbReference>
<dbReference type="PANTHER" id="PTHR11442">
    <property type="entry name" value="HEMOGLOBIN FAMILY MEMBER"/>
    <property type="match status" value="1"/>
</dbReference>
<dbReference type="PANTHER" id="PTHR11442:SF42">
    <property type="entry name" value="HEMOGLOBIN SUBUNIT BETA"/>
    <property type="match status" value="1"/>
</dbReference>
<dbReference type="Pfam" id="PF00042">
    <property type="entry name" value="Globin"/>
    <property type="match status" value="1"/>
</dbReference>
<dbReference type="PRINTS" id="PR00814">
    <property type="entry name" value="BETAHAEM"/>
</dbReference>
<dbReference type="SUPFAM" id="SSF46458">
    <property type="entry name" value="Globin-like"/>
    <property type="match status" value="1"/>
</dbReference>
<dbReference type="PROSITE" id="PS01033">
    <property type="entry name" value="GLOBIN"/>
    <property type="match status" value="1"/>
</dbReference>
<evidence type="ECO:0000250" key="1">
    <source>
        <dbReference type="UniProtKB" id="P02088"/>
    </source>
</evidence>
<evidence type="ECO:0000250" key="2">
    <source>
        <dbReference type="UniProtKB" id="P02089"/>
    </source>
</evidence>
<evidence type="ECO:0000250" key="3">
    <source>
        <dbReference type="UniProtKB" id="P02091"/>
    </source>
</evidence>
<evidence type="ECO:0000255" key="4">
    <source>
        <dbReference type="PROSITE-ProRule" id="PRU00238"/>
    </source>
</evidence>
<evidence type="ECO:0000269" key="5">
    <source>
    </source>
</evidence>
<gene>
    <name type="primary">HBB1</name>
</gene>
<keyword id="KW-0007">Acetylation</keyword>
<keyword id="KW-0903">Direct protein sequencing</keyword>
<keyword id="KW-0349">Heme</keyword>
<keyword id="KW-0408">Iron</keyword>
<keyword id="KW-0479">Metal-binding</keyword>
<keyword id="KW-0488">Methylation</keyword>
<keyword id="KW-0561">Oxygen transport</keyword>
<keyword id="KW-0597">Phosphoprotein</keyword>
<keyword id="KW-0813">Transport</keyword>
<name>HBB1_PANON</name>
<protein>
    <recommendedName>
        <fullName>Hemoglobin subunit beta-1</fullName>
    </recommendedName>
    <alternativeName>
        <fullName>Beta-1-globin</fullName>
    </alternativeName>
    <alternativeName>
        <fullName>Hemoglobin beta-1 chain</fullName>
    </alternativeName>
</protein>
<sequence>MSFLSAEEKGLVNGLWSKVNVDEVGGEALGRLLVVYPWTQRFFQSFGDLSSADAIMSNAKVKAHGKKVLNSFSDGLKNIDDLKGAFAKLSELHCDKLHVDPENFRLLGNVLVCVLAHHFGHEFNPQVQAAFQKVVAGVASALAHRYH</sequence>
<proteinExistence type="evidence at protein level"/>